<feature type="chain" id="PRO_1000059251" description="Potassium-transporting ATPase ATP-binding subunit">
    <location>
        <begin position="1"/>
        <end position="682"/>
    </location>
</feature>
<feature type="transmembrane region" description="Helical" evidence="1">
    <location>
        <begin position="34"/>
        <end position="54"/>
    </location>
</feature>
<feature type="transmembrane region" description="Helical" evidence="1">
    <location>
        <begin position="62"/>
        <end position="82"/>
    </location>
</feature>
<feature type="transmembrane region" description="Helical" evidence="1">
    <location>
        <begin position="219"/>
        <end position="239"/>
    </location>
</feature>
<feature type="transmembrane region" description="Helical" evidence="1">
    <location>
        <begin position="254"/>
        <end position="274"/>
    </location>
</feature>
<feature type="transmembrane region" description="Helical" evidence="1">
    <location>
        <begin position="588"/>
        <end position="608"/>
    </location>
</feature>
<feature type="transmembrane region" description="Helical" evidence="1">
    <location>
        <begin position="616"/>
        <end position="636"/>
    </location>
</feature>
<feature type="transmembrane region" description="Helical" evidence="1">
    <location>
        <begin position="656"/>
        <end position="676"/>
    </location>
</feature>
<feature type="active site" description="4-aspartylphosphate intermediate" evidence="1">
    <location>
        <position position="307"/>
    </location>
</feature>
<feature type="binding site" evidence="1">
    <location>
        <position position="344"/>
    </location>
    <ligand>
        <name>ATP</name>
        <dbReference type="ChEBI" id="CHEBI:30616"/>
    </ligand>
</feature>
<feature type="binding site" evidence="1">
    <location>
        <position position="348"/>
    </location>
    <ligand>
        <name>ATP</name>
        <dbReference type="ChEBI" id="CHEBI:30616"/>
    </ligand>
</feature>
<feature type="binding site" evidence="1">
    <location>
        <begin position="377"/>
        <end position="384"/>
    </location>
    <ligand>
        <name>ATP</name>
        <dbReference type="ChEBI" id="CHEBI:30616"/>
    </ligand>
</feature>
<feature type="binding site" evidence="1">
    <location>
        <position position="395"/>
    </location>
    <ligand>
        <name>ATP</name>
        <dbReference type="ChEBI" id="CHEBI:30616"/>
    </ligand>
</feature>
<feature type="binding site" evidence="1">
    <location>
        <position position="518"/>
    </location>
    <ligand>
        <name>Mg(2+)</name>
        <dbReference type="ChEBI" id="CHEBI:18420"/>
    </ligand>
</feature>
<feature type="binding site" evidence="1">
    <location>
        <position position="522"/>
    </location>
    <ligand>
        <name>Mg(2+)</name>
        <dbReference type="ChEBI" id="CHEBI:18420"/>
    </ligand>
</feature>
<dbReference type="EC" id="7.2.2.6" evidence="1"/>
<dbReference type="EMBL" id="CP000802">
    <property type="protein sequence ID" value="ABV05112.1"/>
    <property type="molecule type" value="Genomic_DNA"/>
</dbReference>
<dbReference type="RefSeq" id="WP_000087947.1">
    <property type="nucleotide sequence ID" value="NC_009800.1"/>
</dbReference>
<dbReference type="BMRB" id="A7ZXV8"/>
<dbReference type="SMR" id="A7ZXV8"/>
<dbReference type="KEGG" id="ecx:EcHS_A0744"/>
<dbReference type="HOGENOM" id="CLU_025728_2_0_6"/>
<dbReference type="GO" id="GO:0005886">
    <property type="term" value="C:plasma membrane"/>
    <property type="evidence" value="ECO:0007669"/>
    <property type="project" value="UniProtKB-SubCell"/>
</dbReference>
<dbReference type="GO" id="GO:0005524">
    <property type="term" value="F:ATP binding"/>
    <property type="evidence" value="ECO:0007669"/>
    <property type="project" value="UniProtKB-UniRule"/>
</dbReference>
<dbReference type="GO" id="GO:0016887">
    <property type="term" value="F:ATP hydrolysis activity"/>
    <property type="evidence" value="ECO:0007669"/>
    <property type="project" value="InterPro"/>
</dbReference>
<dbReference type="GO" id="GO:0000287">
    <property type="term" value="F:magnesium ion binding"/>
    <property type="evidence" value="ECO:0007669"/>
    <property type="project" value="UniProtKB-UniRule"/>
</dbReference>
<dbReference type="GO" id="GO:0008556">
    <property type="term" value="F:P-type potassium transmembrane transporter activity"/>
    <property type="evidence" value="ECO:0007669"/>
    <property type="project" value="UniProtKB-UniRule"/>
</dbReference>
<dbReference type="CDD" id="cd02078">
    <property type="entry name" value="P-type_ATPase_K"/>
    <property type="match status" value="1"/>
</dbReference>
<dbReference type="FunFam" id="2.70.150.10:FF:000010">
    <property type="entry name" value="Potassium-transporting ATPase ATP-binding subunit"/>
    <property type="match status" value="1"/>
</dbReference>
<dbReference type="FunFam" id="3.40.1110.10:FF:000007">
    <property type="entry name" value="Potassium-transporting ATPase ATP-binding subunit"/>
    <property type="match status" value="1"/>
</dbReference>
<dbReference type="Gene3D" id="3.40.1110.10">
    <property type="entry name" value="Calcium-transporting ATPase, cytoplasmic domain N"/>
    <property type="match status" value="1"/>
</dbReference>
<dbReference type="Gene3D" id="2.70.150.10">
    <property type="entry name" value="Calcium-transporting ATPase, cytoplasmic transduction domain A"/>
    <property type="match status" value="1"/>
</dbReference>
<dbReference type="Gene3D" id="3.40.50.1000">
    <property type="entry name" value="HAD superfamily/HAD-like"/>
    <property type="match status" value="1"/>
</dbReference>
<dbReference type="HAMAP" id="MF_00285">
    <property type="entry name" value="KdpB"/>
    <property type="match status" value="1"/>
</dbReference>
<dbReference type="InterPro" id="IPR023299">
    <property type="entry name" value="ATPase_P-typ_cyto_dom_N"/>
</dbReference>
<dbReference type="InterPro" id="IPR018303">
    <property type="entry name" value="ATPase_P-typ_P_site"/>
</dbReference>
<dbReference type="InterPro" id="IPR023298">
    <property type="entry name" value="ATPase_P-typ_TM_dom_sf"/>
</dbReference>
<dbReference type="InterPro" id="IPR008250">
    <property type="entry name" value="ATPase_P-typ_transduc_dom_A_sf"/>
</dbReference>
<dbReference type="InterPro" id="IPR036412">
    <property type="entry name" value="HAD-like_sf"/>
</dbReference>
<dbReference type="InterPro" id="IPR023214">
    <property type="entry name" value="HAD_sf"/>
</dbReference>
<dbReference type="InterPro" id="IPR006391">
    <property type="entry name" value="P-type_ATPase_bsu_IA"/>
</dbReference>
<dbReference type="InterPro" id="IPR001757">
    <property type="entry name" value="P_typ_ATPase"/>
</dbReference>
<dbReference type="InterPro" id="IPR044492">
    <property type="entry name" value="P_typ_ATPase_HD_dom"/>
</dbReference>
<dbReference type="NCBIfam" id="TIGR01494">
    <property type="entry name" value="ATPase_P-type"/>
    <property type="match status" value="2"/>
</dbReference>
<dbReference type="NCBIfam" id="TIGR01497">
    <property type="entry name" value="kdpB"/>
    <property type="match status" value="1"/>
</dbReference>
<dbReference type="PANTHER" id="PTHR43743">
    <property type="entry name" value="POTASSIUM-TRANSPORTING ATPASE ATP-BINDING SUBUNIT"/>
    <property type="match status" value="1"/>
</dbReference>
<dbReference type="PANTHER" id="PTHR43743:SF1">
    <property type="entry name" value="POTASSIUM-TRANSPORTING ATPASE ATP-BINDING SUBUNIT"/>
    <property type="match status" value="1"/>
</dbReference>
<dbReference type="Pfam" id="PF00122">
    <property type="entry name" value="E1-E2_ATPase"/>
    <property type="match status" value="1"/>
</dbReference>
<dbReference type="Pfam" id="PF00702">
    <property type="entry name" value="Hydrolase"/>
    <property type="match status" value="1"/>
</dbReference>
<dbReference type="PRINTS" id="PR00119">
    <property type="entry name" value="CATATPASE"/>
</dbReference>
<dbReference type="SFLD" id="SFLDG00002">
    <property type="entry name" value="C1.7:_P-type_atpase_like"/>
    <property type="match status" value="1"/>
</dbReference>
<dbReference type="SFLD" id="SFLDF00027">
    <property type="entry name" value="p-type_atpase"/>
    <property type="match status" value="1"/>
</dbReference>
<dbReference type="SUPFAM" id="SSF81653">
    <property type="entry name" value="Calcium ATPase, transduction domain A"/>
    <property type="match status" value="1"/>
</dbReference>
<dbReference type="SUPFAM" id="SSF81665">
    <property type="entry name" value="Calcium ATPase, transmembrane domain M"/>
    <property type="match status" value="1"/>
</dbReference>
<dbReference type="SUPFAM" id="SSF56784">
    <property type="entry name" value="HAD-like"/>
    <property type="match status" value="1"/>
</dbReference>
<dbReference type="SUPFAM" id="SSF81660">
    <property type="entry name" value="Metal cation-transporting ATPase, ATP-binding domain N"/>
    <property type="match status" value="1"/>
</dbReference>
<dbReference type="PROSITE" id="PS00154">
    <property type="entry name" value="ATPASE_E1_E2"/>
    <property type="match status" value="1"/>
</dbReference>
<proteinExistence type="inferred from homology"/>
<reference key="1">
    <citation type="journal article" date="2008" name="J. Bacteriol.">
        <title>The pangenome structure of Escherichia coli: comparative genomic analysis of E. coli commensal and pathogenic isolates.</title>
        <authorList>
            <person name="Rasko D.A."/>
            <person name="Rosovitz M.J."/>
            <person name="Myers G.S.A."/>
            <person name="Mongodin E.F."/>
            <person name="Fricke W.F."/>
            <person name="Gajer P."/>
            <person name="Crabtree J."/>
            <person name="Sebaihia M."/>
            <person name="Thomson N.R."/>
            <person name="Chaudhuri R."/>
            <person name="Henderson I.R."/>
            <person name="Sperandio V."/>
            <person name="Ravel J."/>
        </authorList>
    </citation>
    <scope>NUCLEOTIDE SEQUENCE [LARGE SCALE GENOMIC DNA]</scope>
    <source>
        <strain>HS</strain>
    </source>
</reference>
<comment type="function">
    <text evidence="1">Part of the high-affinity ATP-driven potassium transport (or Kdp) system, which catalyzes the hydrolysis of ATP coupled with the electrogenic transport of potassium into the cytoplasm. This subunit is responsible for energy coupling to the transport system and for the release of the potassium ions to the cytoplasm.</text>
</comment>
<comment type="catalytic activity">
    <reaction evidence="1">
        <text>K(+)(out) + ATP + H2O = K(+)(in) + ADP + phosphate + H(+)</text>
        <dbReference type="Rhea" id="RHEA:16777"/>
        <dbReference type="ChEBI" id="CHEBI:15377"/>
        <dbReference type="ChEBI" id="CHEBI:15378"/>
        <dbReference type="ChEBI" id="CHEBI:29103"/>
        <dbReference type="ChEBI" id="CHEBI:30616"/>
        <dbReference type="ChEBI" id="CHEBI:43474"/>
        <dbReference type="ChEBI" id="CHEBI:456216"/>
        <dbReference type="EC" id="7.2.2.6"/>
    </reaction>
    <physiologicalReaction direction="left-to-right" evidence="1">
        <dbReference type="Rhea" id="RHEA:16778"/>
    </physiologicalReaction>
</comment>
<comment type="subunit">
    <text evidence="1">The system is composed of three essential subunits: KdpA, KdpB and KdpC.</text>
</comment>
<comment type="subcellular location">
    <subcellularLocation>
        <location evidence="1">Cell inner membrane</location>
        <topology evidence="1">Multi-pass membrane protein</topology>
    </subcellularLocation>
</comment>
<comment type="similarity">
    <text evidence="1">Belongs to the cation transport ATPase (P-type) (TC 3.A.3) family. Type IA subfamily.</text>
</comment>
<organism>
    <name type="scientific">Escherichia coli O9:H4 (strain HS)</name>
    <dbReference type="NCBI Taxonomy" id="331112"/>
    <lineage>
        <taxon>Bacteria</taxon>
        <taxon>Pseudomonadati</taxon>
        <taxon>Pseudomonadota</taxon>
        <taxon>Gammaproteobacteria</taxon>
        <taxon>Enterobacterales</taxon>
        <taxon>Enterobacteriaceae</taxon>
        <taxon>Escherichia</taxon>
    </lineage>
</organism>
<accession>A7ZXV8</accession>
<sequence length="682" mass="72250">MSRKQLALFEPTLVVQALKEAVKKLNPQAQWRNPVMFIVWIGSLLTTCISIAMASGAMPGNALFSAAISGWLWITVLFANFAEALAEGRSKAQANSLKGVKKTAFARKLREPKYGAVADKVPADQLRKGDIVLVEAGDIIPCDGEVIEGGASVDESAITGESAPVIRESGGDFASVTGGTRILSDWLVIECSVNPGETFLDRMIAMVEGAQRRKTPNEIALTILLIALTIVFLLATATLWPFSAWGGNAVSVTVLVALLVCLIPTTIGGLLSAIGVAGMSRMLGANVIATSGRAVEAAGDVDVLLLDKTGTITLGNRQASEFIPAQGVDEKTLADAAQLASLADETPEGRSIVILAKQRFNLRERDVQSLHATFVPFTAQSRMSGINIDNRMIRKGSVDAIRRHVEANGGHFPADVDQKVDQVARQGATPLVVVEGSRVLGVIALKDIVKGGIKERFAQLRKMGIKTVMITGDNRLTAAAIAAEAGVDDFLAEATPEAKLALIRQYQAEGRLVAMTGDGTNDAPALAQADVAVAMNSGTQAAKEAGNMVDLDSNPTKLIEVVHIGKQMLMTRGSLTTFSIANDVAKYFAIIPAAFAATYPQLNALNIMRLHSPDSAILSAVIFNALIIVFLIPLALKGVSYKPLTASAMLRRNLWIYGLGGLLVPFIGIKVIDLLLTVCGLV</sequence>
<gene>
    <name evidence="1" type="primary">kdpB</name>
    <name type="ordered locus">EcHS_A0744</name>
</gene>
<keyword id="KW-0067">ATP-binding</keyword>
<keyword id="KW-0997">Cell inner membrane</keyword>
<keyword id="KW-1003">Cell membrane</keyword>
<keyword id="KW-0406">Ion transport</keyword>
<keyword id="KW-0460">Magnesium</keyword>
<keyword id="KW-0472">Membrane</keyword>
<keyword id="KW-0479">Metal-binding</keyword>
<keyword id="KW-0547">Nucleotide-binding</keyword>
<keyword id="KW-0597">Phosphoprotein</keyword>
<keyword id="KW-0630">Potassium</keyword>
<keyword id="KW-0633">Potassium transport</keyword>
<keyword id="KW-1278">Translocase</keyword>
<keyword id="KW-0812">Transmembrane</keyword>
<keyword id="KW-1133">Transmembrane helix</keyword>
<keyword id="KW-0813">Transport</keyword>
<evidence type="ECO:0000255" key="1">
    <source>
        <dbReference type="HAMAP-Rule" id="MF_00285"/>
    </source>
</evidence>
<name>KDPB_ECOHS</name>
<protein>
    <recommendedName>
        <fullName evidence="1">Potassium-transporting ATPase ATP-binding subunit</fullName>
        <ecNumber evidence="1">7.2.2.6</ecNumber>
    </recommendedName>
    <alternativeName>
        <fullName evidence="1">ATP phosphohydrolase [potassium-transporting] B chain</fullName>
    </alternativeName>
    <alternativeName>
        <fullName evidence="1">Potassium-binding and translocating subunit B</fullName>
    </alternativeName>
    <alternativeName>
        <fullName evidence="1">Potassium-translocating ATPase B chain</fullName>
    </alternativeName>
</protein>